<dbReference type="EMBL" id="AB016880">
    <property type="protein sequence ID" value="BAB10167.1"/>
    <property type="molecule type" value="Genomic_DNA"/>
</dbReference>
<dbReference type="EMBL" id="CP002688">
    <property type="protein sequence ID" value="AED97556.1"/>
    <property type="molecule type" value="Genomic_DNA"/>
</dbReference>
<dbReference type="RefSeq" id="NP_201012.1">
    <property type="nucleotide sequence ID" value="NM_125599.1"/>
</dbReference>
<dbReference type="SMR" id="Q9FIT3"/>
<dbReference type="FunCoup" id="Q9FIT3">
    <property type="interactions" value="1"/>
</dbReference>
<dbReference type="PaxDb" id="3702-AT5G62060.1"/>
<dbReference type="EnsemblPlants" id="AT5G62060.1">
    <property type="protein sequence ID" value="AT5G62060.1"/>
    <property type="gene ID" value="AT5G62060"/>
</dbReference>
<dbReference type="GeneID" id="836326"/>
<dbReference type="Gramene" id="AT5G62060.1">
    <property type="protein sequence ID" value="AT5G62060.1"/>
    <property type="gene ID" value="AT5G62060"/>
</dbReference>
<dbReference type="KEGG" id="ath:AT5G62060"/>
<dbReference type="Araport" id="AT5G62060"/>
<dbReference type="TAIR" id="AT5G62060"/>
<dbReference type="HOGENOM" id="CLU_027176_8_1_1"/>
<dbReference type="InParanoid" id="Q9FIT3"/>
<dbReference type="OMA" id="CHRRIST"/>
<dbReference type="PhylomeDB" id="Q9FIT3"/>
<dbReference type="PRO" id="PR:Q9FIT3"/>
<dbReference type="Proteomes" id="UP000006548">
    <property type="component" value="Chromosome 5"/>
</dbReference>
<dbReference type="ExpressionAtlas" id="Q9FIT3">
    <property type="expression patterns" value="baseline"/>
</dbReference>
<dbReference type="CDD" id="cd22157">
    <property type="entry name" value="F-box_AtFBW1-like"/>
    <property type="match status" value="1"/>
</dbReference>
<dbReference type="Gene3D" id="1.20.1280.50">
    <property type="match status" value="1"/>
</dbReference>
<dbReference type="InterPro" id="IPR013187">
    <property type="entry name" value="F-box-assoc_dom_typ3"/>
</dbReference>
<dbReference type="InterPro" id="IPR017451">
    <property type="entry name" value="F-box-assoc_interact_dom"/>
</dbReference>
<dbReference type="InterPro" id="IPR036047">
    <property type="entry name" value="F-box-like_dom_sf"/>
</dbReference>
<dbReference type="InterPro" id="IPR001810">
    <property type="entry name" value="F-box_dom"/>
</dbReference>
<dbReference type="NCBIfam" id="TIGR01640">
    <property type="entry name" value="F_box_assoc_1"/>
    <property type="match status" value="1"/>
</dbReference>
<dbReference type="PANTHER" id="PTHR31111">
    <property type="entry name" value="BNAA05G37150D PROTEIN-RELATED"/>
    <property type="match status" value="1"/>
</dbReference>
<dbReference type="PANTHER" id="PTHR31111:SF138">
    <property type="entry name" value="F-BOX ASSOCIATED DOMAIN-CONTAINING PROTEIN"/>
    <property type="match status" value="1"/>
</dbReference>
<dbReference type="Pfam" id="PF00646">
    <property type="entry name" value="F-box"/>
    <property type="match status" value="1"/>
</dbReference>
<dbReference type="Pfam" id="PF08268">
    <property type="entry name" value="FBA_3"/>
    <property type="match status" value="1"/>
</dbReference>
<dbReference type="SMART" id="SM00256">
    <property type="entry name" value="FBOX"/>
    <property type="match status" value="1"/>
</dbReference>
<dbReference type="SUPFAM" id="SSF81383">
    <property type="entry name" value="F-box domain"/>
    <property type="match status" value="1"/>
</dbReference>
<dbReference type="PROSITE" id="PS50181">
    <property type="entry name" value="FBOX"/>
    <property type="match status" value="1"/>
</dbReference>
<feature type="chain" id="PRO_0000283563" description="Putative F-box protein At5g62060">
    <location>
        <begin position="1"/>
        <end position="303"/>
    </location>
</feature>
<feature type="domain" description="F-box" evidence="1">
    <location>
        <begin position="27"/>
        <end position="74"/>
    </location>
</feature>
<protein>
    <recommendedName>
        <fullName>Putative F-box protein At5g62060</fullName>
    </recommendedName>
</protein>
<gene>
    <name type="ordered locus">At5g62060</name>
    <name type="ORF">MTG10.8</name>
</gene>
<keyword id="KW-1185">Reference proteome</keyword>
<sequence>MKRRSKESNYNISSQRRRYREISTREKSRYIDIPLDITVEILKKLPAKSLVRFQCVSKQWSTIIGSRRDFIDSIVARSMTHPQQWWDVLLIFHYQSDKSSFFIFTHPLNTNQELVSIPGLTVDCYGYIRDDLFNHVFVFGYDPVKNKYKVMCLMITKSEEFENACFVFTLRDPKKQWRNVKCGIQHHYPWLPAVCINGAIYYRATEDHGSTFFLVSFDVRSEKFDHVNAPKELIDSKDSTLINYQGKLGFVSYERSVGIWVMEDHNKQGWSKVVDSSIGSGEIVFINKMVICHDTVYVVFFLS</sequence>
<organism>
    <name type="scientific">Arabidopsis thaliana</name>
    <name type="common">Mouse-ear cress</name>
    <dbReference type="NCBI Taxonomy" id="3702"/>
    <lineage>
        <taxon>Eukaryota</taxon>
        <taxon>Viridiplantae</taxon>
        <taxon>Streptophyta</taxon>
        <taxon>Embryophyta</taxon>
        <taxon>Tracheophyta</taxon>
        <taxon>Spermatophyta</taxon>
        <taxon>Magnoliopsida</taxon>
        <taxon>eudicotyledons</taxon>
        <taxon>Gunneridae</taxon>
        <taxon>Pentapetalae</taxon>
        <taxon>rosids</taxon>
        <taxon>malvids</taxon>
        <taxon>Brassicales</taxon>
        <taxon>Brassicaceae</taxon>
        <taxon>Camelineae</taxon>
        <taxon>Arabidopsis</taxon>
    </lineage>
</organism>
<reference key="1">
    <citation type="journal article" date="1998" name="DNA Res.">
        <title>Structural analysis of Arabidopsis thaliana chromosome 5. VII. Sequence features of the regions of 1,013,767 bp covered by sixteen physically assigned P1 and TAC clones.</title>
        <authorList>
            <person name="Nakamura Y."/>
            <person name="Sato S."/>
            <person name="Asamizu E."/>
            <person name="Kaneko T."/>
            <person name="Kotani H."/>
            <person name="Miyajima N."/>
            <person name="Tabata S."/>
        </authorList>
    </citation>
    <scope>NUCLEOTIDE SEQUENCE [LARGE SCALE GENOMIC DNA]</scope>
    <source>
        <strain>cv. Columbia</strain>
    </source>
</reference>
<reference key="2">
    <citation type="journal article" date="2017" name="Plant J.">
        <title>Araport11: a complete reannotation of the Arabidopsis thaliana reference genome.</title>
        <authorList>
            <person name="Cheng C.Y."/>
            <person name="Krishnakumar V."/>
            <person name="Chan A.P."/>
            <person name="Thibaud-Nissen F."/>
            <person name="Schobel S."/>
            <person name="Town C.D."/>
        </authorList>
    </citation>
    <scope>GENOME REANNOTATION</scope>
    <source>
        <strain>cv. Columbia</strain>
    </source>
</reference>
<name>FB297_ARATH</name>
<evidence type="ECO:0000255" key="1">
    <source>
        <dbReference type="PROSITE-ProRule" id="PRU00080"/>
    </source>
</evidence>
<accession>Q9FIT3</accession>
<proteinExistence type="predicted"/>